<evidence type="ECO:0000255" key="1">
    <source>
        <dbReference type="HAMAP-Rule" id="MF_00173"/>
    </source>
</evidence>
<sequence>MNKKETRHQLIRSLISETTIHTQQELQERLQKNGITITQATLSRDMKELNLVKVTSGNDTHYEALAISQTRWEHRLRFYMEDALVMLKIVQHQIILKTLPGLAQSFGSILDAMQIPEIVATVCGDDTCLIVCEDNEQAKACYETLSHYTPPFFFSNK</sequence>
<feature type="chain" id="PRO_1000097891" description="Arginine repressor">
    <location>
        <begin position="1"/>
        <end position="157"/>
    </location>
</feature>
<organism>
    <name type="scientific">Streptococcus pyogenes serotype M49 (strain NZ131)</name>
    <dbReference type="NCBI Taxonomy" id="471876"/>
    <lineage>
        <taxon>Bacteria</taxon>
        <taxon>Bacillati</taxon>
        <taxon>Bacillota</taxon>
        <taxon>Bacilli</taxon>
        <taxon>Lactobacillales</taxon>
        <taxon>Streptococcaceae</taxon>
        <taxon>Streptococcus</taxon>
    </lineage>
</organism>
<gene>
    <name evidence="1" type="primary">argR</name>
    <name type="ordered locus">Spy49_1199</name>
</gene>
<reference key="1">
    <citation type="journal article" date="2008" name="J. Bacteriol.">
        <title>Genome sequence of a nephritogenic and highly transformable M49 strain of Streptococcus pyogenes.</title>
        <authorList>
            <person name="McShan W.M."/>
            <person name="Ferretti J.J."/>
            <person name="Karasawa T."/>
            <person name="Suvorov A.N."/>
            <person name="Lin S."/>
            <person name="Qin B."/>
            <person name="Jia H."/>
            <person name="Kenton S."/>
            <person name="Najar F."/>
            <person name="Wu H."/>
            <person name="Scott J."/>
            <person name="Roe B.A."/>
            <person name="Savic D.J."/>
        </authorList>
    </citation>
    <scope>NUCLEOTIDE SEQUENCE [LARGE SCALE GENOMIC DNA]</scope>
    <source>
        <strain>NZ131</strain>
    </source>
</reference>
<protein>
    <recommendedName>
        <fullName evidence="1">Arginine repressor</fullName>
    </recommendedName>
</protein>
<dbReference type="EMBL" id="CP000829">
    <property type="protein sequence ID" value="ACI61487.1"/>
    <property type="molecule type" value="Genomic_DNA"/>
</dbReference>
<dbReference type="SMR" id="B5XMC5"/>
<dbReference type="KEGG" id="soz:Spy49_1199"/>
<dbReference type="HOGENOM" id="CLU_097103_3_1_9"/>
<dbReference type="UniPathway" id="UPA00068"/>
<dbReference type="Proteomes" id="UP000001039">
    <property type="component" value="Chromosome"/>
</dbReference>
<dbReference type="GO" id="GO:0005737">
    <property type="term" value="C:cytoplasm"/>
    <property type="evidence" value="ECO:0007669"/>
    <property type="project" value="UniProtKB-SubCell"/>
</dbReference>
<dbReference type="GO" id="GO:0034618">
    <property type="term" value="F:arginine binding"/>
    <property type="evidence" value="ECO:0007669"/>
    <property type="project" value="InterPro"/>
</dbReference>
<dbReference type="GO" id="GO:0003677">
    <property type="term" value="F:DNA binding"/>
    <property type="evidence" value="ECO:0007669"/>
    <property type="project" value="UniProtKB-KW"/>
</dbReference>
<dbReference type="GO" id="GO:0003700">
    <property type="term" value="F:DNA-binding transcription factor activity"/>
    <property type="evidence" value="ECO:0007669"/>
    <property type="project" value="UniProtKB-UniRule"/>
</dbReference>
<dbReference type="GO" id="GO:0006526">
    <property type="term" value="P:L-arginine biosynthetic process"/>
    <property type="evidence" value="ECO:0007669"/>
    <property type="project" value="UniProtKB-UniPathway"/>
</dbReference>
<dbReference type="GO" id="GO:0051259">
    <property type="term" value="P:protein complex oligomerization"/>
    <property type="evidence" value="ECO:0007669"/>
    <property type="project" value="InterPro"/>
</dbReference>
<dbReference type="GO" id="GO:1900079">
    <property type="term" value="P:regulation of arginine biosynthetic process"/>
    <property type="evidence" value="ECO:0007669"/>
    <property type="project" value="UniProtKB-UniRule"/>
</dbReference>
<dbReference type="Gene3D" id="3.30.1360.40">
    <property type="match status" value="1"/>
</dbReference>
<dbReference type="Gene3D" id="1.10.10.10">
    <property type="entry name" value="Winged helix-like DNA-binding domain superfamily/Winged helix DNA-binding domain"/>
    <property type="match status" value="1"/>
</dbReference>
<dbReference type="HAMAP" id="MF_00173">
    <property type="entry name" value="Arg_repressor"/>
    <property type="match status" value="1"/>
</dbReference>
<dbReference type="InterPro" id="IPR001669">
    <property type="entry name" value="Arg_repress"/>
</dbReference>
<dbReference type="InterPro" id="IPR020899">
    <property type="entry name" value="Arg_repress_C"/>
</dbReference>
<dbReference type="InterPro" id="IPR036251">
    <property type="entry name" value="Arg_repress_C_sf"/>
</dbReference>
<dbReference type="InterPro" id="IPR020900">
    <property type="entry name" value="Arg_repress_DNA-bd"/>
</dbReference>
<dbReference type="InterPro" id="IPR036388">
    <property type="entry name" value="WH-like_DNA-bd_sf"/>
</dbReference>
<dbReference type="InterPro" id="IPR036390">
    <property type="entry name" value="WH_DNA-bd_sf"/>
</dbReference>
<dbReference type="PANTHER" id="PTHR34471">
    <property type="entry name" value="ARGININE REPRESSOR"/>
    <property type="match status" value="1"/>
</dbReference>
<dbReference type="PANTHER" id="PTHR34471:SF1">
    <property type="entry name" value="ARGININE REPRESSOR"/>
    <property type="match status" value="1"/>
</dbReference>
<dbReference type="Pfam" id="PF01316">
    <property type="entry name" value="Arg_repressor"/>
    <property type="match status" value="1"/>
</dbReference>
<dbReference type="Pfam" id="PF02863">
    <property type="entry name" value="Arg_repressor_C"/>
    <property type="match status" value="1"/>
</dbReference>
<dbReference type="PRINTS" id="PR01467">
    <property type="entry name" value="ARGREPRESSOR"/>
</dbReference>
<dbReference type="SUPFAM" id="SSF55252">
    <property type="entry name" value="C-terminal domain of arginine repressor"/>
    <property type="match status" value="1"/>
</dbReference>
<dbReference type="SUPFAM" id="SSF46785">
    <property type="entry name" value="Winged helix' DNA-binding domain"/>
    <property type="match status" value="1"/>
</dbReference>
<keyword id="KW-0028">Amino-acid biosynthesis</keyword>
<keyword id="KW-0055">Arginine biosynthesis</keyword>
<keyword id="KW-0963">Cytoplasm</keyword>
<keyword id="KW-0238">DNA-binding</keyword>
<keyword id="KW-0678">Repressor</keyword>
<keyword id="KW-0804">Transcription</keyword>
<keyword id="KW-0805">Transcription regulation</keyword>
<proteinExistence type="inferred from homology"/>
<accession>B5XMC5</accession>
<comment type="function">
    <text evidence="1">Regulates arginine biosynthesis genes.</text>
</comment>
<comment type="pathway">
    <text>Amino-acid biosynthesis; L-arginine biosynthesis [regulation].</text>
</comment>
<comment type="subcellular location">
    <subcellularLocation>
        <location evidence="1">Cytoplasm</location>
    </subcellularLocation>
</comment>
<comment type="similarity">
    <text evidence="1">Belongs to the ArgR family.</text>
</comment>
<name>ARGR_STRPZ</name>